<comment type="function">
    <text evidence="1">Transports acetate.</text>
</comment>
<comment type="subcellular location">
    <subcellularLocation>
        <location evidence="1">Cell inner membrane</location>
        <topology evidence="1">Multi-pass membrane protein</topology>
    </subcellularLocation>
</comment>
<comment type="similarity">
    <text evidence="1">Belongs to the sodium:solute symporter (SSF) (TC 2.A.21) family.</text>
</comment>
<sequence>MKIRHWSALSLFVLPALAQAEALTGEVHRQPLNIQAIVMFLLFVGGTLYITYWASKRTRSRQDYYTAGGRITGFQNGLAIAGDYMSAASFLGISALVYASGYDGLIYSIGFLIGWPIILFLIAERLRNLGRYTFADVASYRLQQRPIRTLSACGSLVVVALYLIAQMVGAGKLIQLLFGLNYHVAVVLVGILMVLYVLFGGMLATTWVQIIKAVMLLSGATFMAIMVMKSVNFNFNTLFSEAVKVHPKGLSIMSPGGLVSDPISALSLGLALMFGTAGLPHILMRFFTVSDAKEARKSVFYATGFIGYFYILTFIIGFGAILLVGPNQTFKDAAGALLGGNNMAAVHLANAVGGSFFLGFISAVAFATILAVVAGLTLAGASAVSHDLYASVIKKGKANERDELRVSKITVIILGIVAIGLGILFEKQNIAFMVGLAFSIAASCNFPIIIISMYWDKLTTRGAMIGGWLGLSTAVILMILGPTIWVTILGHEKPIYPYEYPALFSMIAAFVGTWFFSITDNSETGKQERLLFKSQFVRSQTGLGASKGGAH</sequence>
<name>ACTP_YERPB</name>
<proteinExistence type="inferred from homology"/>
<gene>
    <name evidence="1" type="primary">actP</name>
    <name type="ordered locus">YPTS_0330</name>
</gene>
<keyword id="KW-0997">Cell inner membrane</keyword>
<keyword id="KW-1003">Cell membrane</keyword>
<keyword id="KW-0406">Ion transport</keyword>
<keyword id="KW-0472">Membrane</keyword>
<keyword id="KW-0915">Sodium</keyword>
<keyword id="KW-0739">Sodium transport</keyword>
<keyword id="KW-0769">Symport</keyword>
<keyword id="KW-0812">Transmembrane</keyword>
<keyword id="KW-1133">Transmembrane helix</keyword>
<keyword id="KW-0813">Transport</keyword>
<accession>B2K137</accession>
<dbReference type="EMBL" id="CP001048">
    <property type="protein sequence ID" value="ACC87319.1"/>
    <property type="molecule type" value="Genomic_DNA"/>
</dbReference>
<dbReference type="RefSeq" id="WP_011191562.1">
    <property type="nucleotide sequence ID" value="NZ_CP009780.1"/>
</dbReference>
<dbReference type="SMR" id="B2K137"/>
<dbReference type="GeneID" id="49787700"/>
<dbReference type="KEGG" id="ypb:YPTS_0330"/>
<dbReference type="PATRIC" id="fig|502801.10.peg.4005"/>
<dbReference type="GO" id="GO:0005886">
    <property type="term" value="C:plasma membrane"/>
    <property type="evidence" value="ECO:0007669"/>
    <property type="project" value="UniProtKB-SubCell"/>
</dbReference>
<dbReference type="GO" id="GO:0015123">
    <property type="term" value="F:acetate transmembrane transporter activity"/>
    <property type="evidence" value="ECO:0007669"/>
    <property type="project" value="UniProtKB-UniRule"/>
</dbReference>
<dbReference type="GO" id="GO:0043879">
    <property type="term" value="F:glycolate transmembrane transporter activity"/>
    <property type="evidence" value="ECO:0007669"/>
    <property type="project" value="InterPro"/>
</dbReference>
<dbReference type="GO" id="GO:0015293">
    <property type="term" value="F:symporter activity"/>
    <property type="evidence" value="ECO:0007669"/>
    <property type="project" value="UniProtKB-KW"/>
</dbReference>
<dbReference type="GO" id="GO:0006847">
    <property type="term" value="P:plasma membrane acetate transport"/>
    <property type="evidence" value="ECO:0007669"/>
    <property type="project" value="TreeGrafter"/>
</dbReference>
<dbReference type="GO" id="GO:0006814">
    <property type="term" value="P:sodium ion transport"/>
    <property type="evidence" value="ECO:0007669"/>
    <property type="project" value="UniProtKB-KW"/>
</dbReference>
<dbReference type="CDD" id="cd11480">
    <property type="entry name" value="SLC5sbd_u4"/>
    <property type="match status" value="1"/>
</dbReference>
<dbReference type="FunFam" id="1.20.1730.10:FF:000001">
    <property type="entry name" value="Cation/acetate symporter ActP"/>
    <property type="match status" value="1"/>
</dbReference>
<dbReference type="Gene3D" id="1.20.1730.10">
    <property type="entry name" value="Sodium/glucose cotransporter"/>
    <property type="match status" value="1"/>
</dbReference>
<dbReference type="HAMAP" id="MF_01426">
    <property type="entry name" value="Acet_symport_ActP"/>
    <property type="match status" value="1"/>
</dbReference>
<dbReference type="InterPro" id="IPR014083">
    <property type="entry name" value="Cation/Ac_symporter_ActP"/>
</dbReference>
<dbReference type="InterPro" id="IPR038377">
    <property type="entry name" value="Na/Glc_symporter_sf"/>
</dbReference>
<dbReference type="InterPro" id="IPR001734">
    <property type="entry name" value="Na/solute_symporter"/>
</dbReference>
<dbReference type="InterPro" id="IPR018212">
    <property type="entry name" value="Na/solute_symporter_CS"/>
</dbReference>
<dbReference type="InterPro" id="IPR050277">
    <property type="entry name" value="Sodium:Solute_Symporter"/>
</dbReference>
<dbReference type="NCBIfam" id="NF006903">
    <property type="entry name" value="PRK09395.1"/>
    <property type="match status" value="1"/>
</dbReference>
<dbReference type="NCBIfam" id="NF009135">
    <property type="entry name" value="PRK12488.1"/>
    <property type="match status" value="1"/>
</dbReference>
<dbReference type="NCBIfam" id="TIGR00813">
    <property type="entry name" value="sss"/>
    <property type="match status" value="1"/>
</dbReference>
<dbReference type="NCBIfam" id="TIGR02711">
    <property type="entry name" value="symport_actP"/>
    <property type="match status" value="1"/>
</dbReference>
<dbReference type="PANTHER" id="PTHR48086:SF6">
    <property type="entry name" value="CATION_ACETATE SYMPORTER ACTP"/>
    <property type="match status" value="1"/>
</dbReference>
<dbReference type="PANTHER" id="PTHR48086">
    <property type="entry name" value="SODIUM/PROLINE SYMPORTER-RELATED"/>
    <property type="match status" value="1"/>
</dbReference>
<dbReference type="Pfam" id="PF00474">
    <property type="entry name" value="SSF"/>
    <property type="match status" value="1"/>
</dbReference>
<dbReference type="PROSITE" id="PS00456">
    <property type="entry name" value="NA_SOLUT_SYMP_1"/>
    <property type="match status" value="1"/>
</dbReference>
<dbReference type="PROSITE" id="PS50283">
    <property type="entry name" value="NA_SOLUT_SYMP_3"/>
    <property type="match status" value="1"/>
</dbReference>
<evidence type="ECO:0000255" key="1">
    <source>
        <dbReference type="HAMAP-Rule" id="MF_01426"/>
    </source>
</evidence>
<protein>
    <recommendedName>
        <fullName evidence="1">Cation/acetate symporter ActP</fullName>
    </recommendedName>
    <alternativeName>
        <fullName evidence="1">Acetate permease</fullName>
    </alternativeName>
    <alternativeName>
        <fullName evidence="1">Acetate transporter ActP</fullName>
    </alternativeName>
</protein>
<feature type="chain" id="PRO_1000145731" description="Cation/acetate symporter ActP">
    <location>
        <begin position="1"/>
        <end position="551"/>
    </location>
</feature>
<feature type="transmembrane region" description="Helical" evidence="1">
    <location>
        <begin position="5"/>
        <end position="25"/>
    </location>
</feature>
<feature type="transmembrane region" description="Helical" evidence="1">
    <location>
        <begin position="34"/>
        <end position="54"/>
    </location>
</feature>
<feature type="transmembrane region" description="Helical" evidence="1">
    <location>
        <begin position="77"/>
        <end position="97"/>
    </location>
</feature>
<feature type="transmembrane region" description="Helical" evidence="1">
    <location>
        <begin position="104"/>
        <end position="124"/>
    </location>
</feature>
<feature type="transmembrane region" description="Helical" evidence="1">
    <location>
        <begin position="150"/>
        <end position="170"/>
    </location>
</feature>
<feature type="transmembrane region" description="Helical" evidence="1">
    <location>
        <begin position="184"/>
        <end position="204"/>
    </location>
</feature>
<feature type="transmembrane region" description="Helical" evidence="1">
    <location>
        <begin position="207"/>
        <end position="227"/>
    </location>
</feature>
<feature type="transmembrane region" description="Helical" evidence="1">
    <location>
        <begin position="263"/>
        <end position="283"/>
    </location>
</feature>
<feature type="transmembrane region" description="Helical" evidence="1">
    <location>
        <begin position="304"/>
        <end position="324"/>
    </location>
</feature>
<feature type="transmembrane region" description="Helical" evidence="1">
    <location>
        <begin position="356"/>
        <end position="376"/>
    </location>
</feature>
<feature type="transmembrane region" description="Helical" evidence="1">
    <location>
        <begin position="406"/>
        <end position="426"/>
    </location>
</feature>
<feature type="transmembrane region" description="Helical" evidence="1">
    <location>
        <begin position="430"/>
        <end position="450"/>
    </location>
</feature>
<feature type="transmembrane region" description="Helical" evidence="1">
    <location>
        <begin position="469"/>
        <end position="489"/>
    </location>
</feature>
<feature type="transmembrane region" description="Helical" evidence="1">
    <location>
        <begin position="498"/>
        <end position="518"/>
    </location>
</feature>
<reference key="1">
    <citation type="submission" date="2008-04" db="EMBL/GenBank/DDBJ databases">
        <title>Complete sequence of Yersinia pseudotuberculosis PB1/+.</title>
        <authorList>
            <person name="Copeland A."/>
            <person name="Lucas S."/>
            <person name="Lapidus A."/>
            <person name="Glavina del Rio T."/>
            <person name="Dalin E."/>
            <person name="Tice H."/>
            <person name="Bruce D."/>
            <person name="Goodwin L."/>
            <person name="Pitluck S."/>
            <person name="Munk A.C."/>
            <person name="Brettin T."/>
            <person name="Detter J.C."/>
            <person name="Han C."/>
            <person name="Tapia R."/>
            <person name="Schmutz J."/>
            <person name="Larimer F."/>
            <person name="Land M."/>
            <person name="Hauser L."/>
            <person name="Challacombe J.F."/>
            <person name="Green L."/>
            <person name="Lindler L.E."/>
            <person name="Nikolich M.P."/>
            <person name="Richardson P."/>
        </authorList>
    </citation>
    <scope>NUCLEOTIDE SEQUENCE [LARGE SCALE GENOMIC DNA]</scope>
    <source>
        <strain>PB1/+</strain>
    </source>
</reference>
<organism>
    <name type="scientific">Yersinia pseudotuberculosis serotype IB (strain PB1/+)</name>
    <dbReference type="NCBI Taxonomy" id="502801"/>
    <lineage>
        <taxon>Bacteria</taxon>
        <taxon>Pseudomonadati</taxon>
        <taxon>Pseudomonadota</taxon>
        <taxon>Gammaproteobacteria</taxon>
        <taxon>Enterobacterales</taxon>
        <taxon>Yersiniaceae</taxon>
        <taxon>Yersinia</taxon>
    </lineage>
</organism>